<dbReference type="EMBL" id="CR860128">
    <property type="protein sequence ID" value="CAH92272.1"/>
    <property type="molecule type" value="mRNA"/>
</dbReference>
<dbReference type="RefSeq" id="NP_001126327.1">
    <property type="nucleotide sequence ID" value="NM_001132855.2"/>
</dbReference>
<dbReference type="SMR" id="Q5R7I8"/>
<dbReference type="FunCoup" id="Q5R7I8">
    <property type="interactions" value="4"/>
</dbReference>
<dbReference type="STRING" id="9601.ENSPPYP00000008503"/>
<dbReference type="GeneID" id="100173308"/>
<dbReference type="KEGG" id="pon:100173308"/>
<dbReference type="CTD" id="7567"/>
<dbReference type="eggNOG" id="KOG1721">
    <property type="taxonomic scope" value="Eukaryota"/>
</dbReference>
<dbReference type="InParanoid" id="Q5R7I8"/>
<dbReference type="OrthoDB" id="6077919at2759"/>
<dbReference type="Proteomes" id="UP000001595">
    <property type="component" value="Unplaced"/>
</dbReference>
<dbReference type="GO" id="GO:0005634">
    <property type="term" value="C:nucleus"/>
    <property type="evidence" value="ECO:0007669"/>
    <property type="project" value="UniProtKB-SubCell"/>
</dbReference>
<dbReference type="GO" id="GO:0001228">
    <property type="term" value="F:DNA-binding transcription activator activity, RNA polymerase II-specific"/>
    <property type="evidence" value="ECO:0007669"/>
    <property type="project" value="TreeGrafter"/>
</dbReference>
<dbReference type="GO" id="GO:0000978">
    <property type="term" value="F:RNA polymerase II cis-regulatory region sequence-specific DNA binding"/>
    <property type="evidence" value="ECO:0007669"/>
    <property type="project" value="TreeGrafter"/>
</dbReference>
<dbReference type="GO" id="GO:0008270">
    <property type="term" value="F:zinc ion binding"/>
    <property type="evidence" value="ECO:0007669"/>
    <property type="project" value="UniProtKB-KW"/>
</dbReference>
<dbReference type="CDD" id="cd07765">
    <property type="entry name" value="KRAB_A-box"/>
    <property type="match status" value="1"/>
</dbReference>
<dbReference type="FunFam" id="3.30.160.60:FF:004935">
    <property type="match status" value="1"/>
</dbReference>
<dbReference type="FunFam" id="3.30.160.60:FF:001946">
    <property type="entry name" value="Zinc finger protein 19"/>
    <property type="match status" value="1"/>
</dbReference>
<dbReference type="FunFam" id="3.30.160.60:FF:002172">
    <property type="entry name" value="Zinc finger protein 19"/>
    <property type="match status" value="1"/>
</dbReference>
<dbReference type="FunFam" id="3.30.160.60:FF:003479">
    <property type="entry name" value="Zinc finger protein 19"/>
    <property type="match status" value="1"/>
</dbReference>
<dbReference type="FunFam" id="3.30.160.60:FF:000794">
    <property type="entry name" value="zinc finger protein 2 isoform X2"/>
    <property type="match status" value="2"/>
</dbReference>
<dbReference type="FunFam" id="3.30.160.60:FF:002402">
    <property type="entry name" value="Zinc finger protein 347"/>
    <property type="match status" value="1"/>
</dbReference>
<dbReference type="FunFam" id="3.30.160.60:FF:001498">
    <property type="entry name" value="Zinc finger protein 404"/>
    <property type="match status" value="1"/>
</dbReference>
<dbReference type="FunFam" id="3.30.160.60:FF:002004">
    <property type="entry name" value="Zinc finger protein 473"/>
    <property type="match status" value="1"/>
</dbReference>
<dbReference type="FunFam" id="3.30.160.60:FF:000737">
    <property type="entry name" value="Zinc finger protein 565"/>
    <property type="match status" value="1"/>
</dbReference>
<dbReference type="Gene3D" id="6.10.140.140">
    <property type="match status" value="1"/>
</dbReference>
<dbReference type="Gene3D" id="3.30.160.60">
    <property type="entry name" value="Classic Zinc Finger"/>
    <property type="match status" value="10"/>
</dbReference>
<dbReference type="InterPro" id="IPR001909">
    <property type="entry name" value="KRAB"/>
</dbReference>
<dbReference type="InterPro" id="IPR036051">
    <property type="entry name" value="KRAB_dom_sf"/>
</dbReference>
<dbReference type="InterPro" id="IPR036236">
    <property type="entry name" value="Znf_C2H2_sf"/>
</dbReference>
<dbReference type="InterPro" id="IPR013087">
    <property type="entry name" value="Znf_C2H2_type"/>
</dbReference>
<dbReference type="PANTHER" id="PTHR24393">
    <property type="entry name" value="ZINC FINGER PROTEIN"/>
    <property type="match status" value="1"/>
</dbReference>
<dbReference type="PANTHER" id="PTHR24393:SF100">
    <property type="entry name" value="ZINC FINGER PROTEIN-RELATED"/>
    <property type="match status" value="1"/>
</dbReference>
<dbReference type="Pfam" id="PF01352">
    <property type="entry name" value="KRAB"/>
    <property type="match status" value="1"/>
</dbReference>
<dbReference type="Pfam" id="PF00096">
    <property type="entry name" value="zf-C2H2"/>
    <property type="match status" value="9"/>
</dbReference>
<dbReference type="SMART" id="SM00349">
    <property type="entry name" value="KRAB"/>
    <property type="match status" value="1"/>
</dbReference>
<dbReference type="SMART" id="SM00355">
    <property type="entry name" value="ZnF_C2H2"/>
    <property type="match status" value="9"/>
</dbReference>
<dbReference type="SUPFAM" id="SSF57667">
    <property type="entry name" value="beta-beta-alpha zinc fingers"/>
    <property type="match status" value="6"/>
</dbReference>
<dbReference type="SUPFAM" id="SSF109640">
    <property type="entry name" value="KRAB domain (Kruppel-associated box)"/>
    <property type="match status" value="1"/>
</dbReference>
<dbReference type="PROSITE" id="PS50805">
    <property type="entry name" value="KRAB"/>
    <property type="match status" value="1"/>
</dbReference>
<dbReference type="PROSITE" id="PS00028">
    <property type="entry name" value="ZINC_FINGER_C2H2_1"/>
    <property type="match status" value="9"/>
</dbReference>
<dbReference type="PROSITE" id="PS50157">
    <property type="entry name" value="ZINC_FINGER_C2H2_2"/>
    <property type="match status" value="9"/>
</dbReference>
<accession>Q5R7I8</accession>
<gene>
    <name type="primary">ZNF19</name>
</gene>
<feature type="chain" id="PRO_0000367590" description="Zinc finger protein 19">
    <location>
        <begin position="1"/>
        <end position="446"/>
    </location>
</feature>
<feature type="domain" description="KRAB" evidence="3">
    <location>
        <begin position="2"/>
        <end position="73"/>
    </location>
</feature>
<feature type="zinc finger region" description="C2H2-type 1" evidence="2">
    <location>
        <begin position="149"/>
        <end position="171"/>
    </location>
</feature>
<feature type="zinc finger region" description="C2H2-type 2" evidence="2">
    <location>
        <begin position="177"/>
        <end position="199"/>
    </location>
</feature>
<feature type="zinc finger region" description="C2H2-type 3" evidence="2">
    <location>
        <begin position="205"/>
        <end position="227"/>
    </location>
</feature>
<feature type="zinc finger region" description="C2H2-type 4" evidence="2">
    <location>
        <begin position="233"/>
        <end position="255"/>
    </location>
</feature>
<feature type="zinc finger region" description="C2H2-type 5" evidence="2">
    <location>
        <begin position="261"/>
        <end position="283"/>
    </location>
</feature>
<feature type="zinc finger region" description="C2H2-type 6" evidence="2">
    <location>
        <begin position="289"/>
        <end position="311"/>
    </location>
</feature>
<feature type="zinc finger region" description="C2H2-type 7" evidence="2">
    <location>
        <begin position="317"/>
        <end position="339"/>
    </location>
</feature>
<feature type="zinc finger region" description="C2H2-type 8" evidence="2">
    <location>
        <begin position="345"/>
        <end position="367"/>
    </location>
</feature>
<feature type="zinc finger region" description="C2H2-type 9" evidence="2">
    <location>
        <begin position="373"/>
        <end position="395"/>
    </location>
</feature>
<feature type="zinc finger region" description="C2H2-type 10; degenerate" evidence="2">
    <location>
        <begin position="401"/>
        <end position="423"/>
    </location>
</feature>
<protein>
    <recommendedName>
        <fullName>Zinc finger protein 19</fullName>
    </recommendedName>
</protein>
<comment type="function">
    <text evidence="1">May be involved in transcriptional regulation.</text>
</comment>
<comment type="subcellular location">
    <subcellularLocation>
        <location evidence="1">Nucleus</location>
    </subcellularLocation>
</comment>
<comment type="similarity">
    <text evidence="4">Belongs to the krueppel C2H2-type zinc-finger protein family.</text>
</comment>
<keyword id="KW-0238">DNA-binding</keyword>
<keyword id="KW-0479">Metal-binding</keyword>
<keyword id="KW-0539">Nucleus</keyword>
<keyword id="KW-1185">Reference proteome</keyword>
<keyword id="KW-0677">Repeat</keyword>
<keyword id="KW-0804">Transcription</keyword>
<keyword id="KW-0805">Transcription regulation</keyword>
<keyword id="KW-0862">Zinc</keyword>
<keyword id="KW-0863">Zinc-finger</keyword>
<proteinExistence type="evidence at transcript level"/>
<organism>
    <name type="scientific">Pongo abelii</name>
    <name type="common">Sumatran orangutan</name>
    <name type="synonym">Pongo pygmaeus abelii</name>
    <dbReference type="NCBI Taxonomy" id="9601"/>
    <lineage>
        <taxon>Eukaryota</taxon>
        <taxon>Metazoa</taxon>
        <taxon>Chordata</taxon>
        <taxon>Craniata</taxon>
        <taxon>Vertebrata</taxon>
        <taxon>Euteleostomi</taxon>
        <taxon>Mammalia</taxon>
        <taxon>Eutheria</taxon>
        <taxon>Euarchontoglires</taxon>
        <taxon>Primates</taxon>
        <taxon>Haplorrhini</taxon>
        <taxon>Catarrhini</taxon>
        <taxon>Hominidae</taxon>
        <taxon>Pongo</taxon>
    </lineage>
</organism>
<sequence>MVTFEDVAVHFTKTEWTGLSPAQRALYRSVMLENFGNLTALGYPVPKPALISLLEGGDMAWGLEAQDDPPAETTKNVRKDVETNIDSESTLIQGISEERDGMMSHGQLKSVPQRTDFPETCNVEKHQDIPTVKNIRGKVPRIPCARKPFICEECGKSFSYFSYYARHQRIHTGEKPFECSECGKAFNGNSSLIRHQRIHTGEKPYQCEECGRAFNDNANLIRHQRIHSGDRPYYCTECGNSFTSSSEFVIHQRIHTGEKPYECNECGKAFVGNSPLLRHQKIHTGEKPYECNECGKSFGRTSHLSQHQRIHTGEKPYSCKVCGQAFNFHTKLTRHQRIHSEEKPFDCVDCGKAFSAQEQLKRHLRIHTQESSYVCDECGKAFTSKRNLHQHQRIHTGEKPYEYSKYEKAFGTSSQLGHLEHVHSGEKPVLDICRFGLPEFFTPFYW</sequence>
<reference key="1">
    <citation type="submission" date="2004-11" db="EMBL/GenBank/DDBJ databases">
        <authorList>
            <consortium name="The German cDNA consortium"/>
        </authorList>
    </citation>
    <scope>NUCLEOTIDE SEQUENCE [LARGE SCALE MRNA]</scope>
    <source>
        <tissue>Kidney</tissue>
    </source>
</reference>
<evidence type="ECO:0000250" key="1"/>
<evidence type="ECO:0000255" key="2">
    <source>
        <dbReference type="PROSITE-ProRule" id="PRU00042"/>
    </source>
</evidence>
<evidence type="ECO:0000255" key="3">
    <source>
        <dbReference type="PROSITE-ProRule" id="PRU00119"/>
    </source>
</evidence>
<evidence type="ECO:0000305" key="4"/>
<name>ZNF19_PONAB</name>